<dbReference type="EMBL" id="CP001072">
    <property type="protein sequence ID" value="ACD48590.1"/>
    <property type="molecule type" value="Genomic_DNA"/>
</dbReference>
<dbReference type="RefSeq" id="WP_000254336.1">
    <property type="nucleotide sequence ID" value="NC_010698.2"/>
</dbReference>
<dbReference type="SMR" id="B2UUQ8"/>
<dbReference type="KEGG" id="hps:HPSH_05930"/>
<dbReference type="HOGENOM" id="CLU_077636_2_0_7"/>
<dbReference type="GO" id="GO:0005737">
    <property type="term" value="C:cytoplasm"/>
    <property type="evidence" value="ECO:0007669"/>
    <property type="project" value="UniProtKB-SubCell"/>
</dbReference>
<dbReference type="GO" id="GO:0005840">
    <property type="term" value="C:ribosome"/>
    <property type="evidence" value="ECO:0007669"/>
    <property type="project" value="InterPro"/>
</dbReference>
<dbReference type="GO" id="GO:0043022">
    <property type="term" value="F:ribosome binding"/>
    <property type="evidence" value="ECO:0007669"/>
    <property type="project" value="InterPro"/>
</dbReference>
<dbReference type="GO" id="GO:0042274">
    <property type="term" value="P:ribosomal small subunit biogenesis"/>
    <property type="evidence" value="ECO:0007669"/>
    <property type="project" value="UniProtKB-UniRule"/>
</dbReference>
<dbReference type="GO" id="GO:0006364">
    <property type="term" value="P:rRNA processing"/>
    <property type="evidence" value="ECO:0007669"/>
    <property type="project" value="UniProtKB-UniRule"/>
</dbReference>
<dbReference type="Gene3D" id="2.30.30.240">
    <property type="entry name" value="PRC-barrel domain"/>
    <property type="match status" value="1"/>
</dbReference>
<dbReference type="Gene3D" id="2.40.30.60">
    <property type="entry name" value="RimM"/>
    <property type="match status" value="1"/>
</dbReference>
<dbReference type="HAMAP" id="MF_00014">
    <property type="entry name" value="Ribosome_mat_RimM"/>
    <property type="match status" value="1"/>
</dbReference>
<dbReference type="InterPro" id="IPR027275">
    <property type="entry name" value="PRC-brl_dom"/>
</dbReference>
<dbReference type="InterPro" id="IPR011033">
    <property type="entry name" value="PRC_barrel-like_sf"/>
</dbReference>
<dbReference type="InterPro" id="IPR011961">
    <property type="entry name" value="RimM"/>
</dbReference>
<dbReference type="InterPro" id="IPR002676">
    <property type="entry name" value="RimM_N"/>
</dbReference>
<dbReference type="InterPro" id="IPR036976">
    <property type="entry name" value="RimM_N_sf"/>
</dbReference>
<dbReference type="InterPro" id="IPR009000">
    <property type="entry name" value="Transl_B-barrel_sf"/>
</dbReference>
<dbReference type="NCBIfam" id="TIGR02273">
    <property type="entry name" value="16S_RimM"/>
    <property type="match status" value="1"/>
</dbReference>
<dbReference type="PANTHER" id="PTHR33692">
    <property type="entry name" value="RIBOSOME MATURATION FACTOR RIMM"/>
    <property type="match status" value="1"/>
</dbReference>
<dbReference type="PANTHER" id="PTHR33692:SF1">
    <property type="entry name" value="RIBOSOME MATURATION FACTOR RIMM"/>
    <property type="match status" value="1"/>
</dbReference>
<dbReference type="Pfam" id="PF05239">
    <property type="entry name" value="PRC"/>
    <property type="match status" value="1"/>
</dbReference>
<dbReference type="Pfam" id="PF01782">
    <property type="entry name" value="RimM"/>
    <property type="match status" value="1"/>
</dbReference>
<dbReference type="SUPFAM" id="SSF50346">
    <property type="entry name" value="PRC-barrel domain"/>
    <property type="match status" value="1"/>
</dbReference>
<dbReference type="SUPFAM" id="SSF50447">
    <property type="entry name" value="Translation proteins"/>
    <property type="match status" value="1"/>
</dbReference>
<gene>
    <name evidence="1" type="primary">rimM</name>
    <name type="ordered locus">HPSH_05930</name>
</gene>
<organism>
    <name type="scientific">Helicobacter pylori (strain Shi470)</name>
    <dbReference type="NCBI Taxonomy" id="512562"/>
    <lineage>
        <taxon>Bacteria</taxon>
        <taxon>Pseudomonadati</taxon>
        <taxon>Campylobacterota</taxon>
        <taxon>Epsilonproteobacteria</taxon>
        <taxon>Campylobacterales</taxon>
        <taxon>Helicobacteraceae</taxon>
        <taxon>Helicobacter</taxon>
    </lineage>
</organism>
<proteinExistence type="inferred from homology"/>
<sequence>MVSMLLVGRIGKSVGLNGGLRLHLESDFPECLKKGVKVSVAPLNAFFCTSSFKGYTIHSYEHAKNLLFLETIHTPEKAKELTNLGLFMSEAESKKLCVLKDGEFFYCDLVGLSVVEENETLGKVVEIQRISQIDYFMVETARSLVEKGLAKIFLIPYRDFYIKEILLQDKKITTNNAKTLLENS</sequence>
<keyword id="KW-0143">Chaperone</keyword>
<keyword id="KW-0963">Cytoplasm</keyword>
<keyword id="KW-0690">Ribosome biogenesis</keyword>
<keyword id="KW-0698">rRNA processing</keyword>
<reference key="1">
    <citation type="submission" date="2008-05" db="EMBL/GenBank/DDBJ databases">
        <title>Genome sequence of Helicobacter pylori from the remote Amazon: traces of Asian ancestry of the first Americans.</title>
        <authorList>
            <person name="Kersulyte D."/>
            <person name="Kalia A."/>
            <person name="Gilman R.H."/>
            <person name="Berg D.E."/>
        </authorList>
    </citation>
    <scope>NUCLEOTIDE SEQUENCE [LARGE SCALE GENOMIC DNA]</scope>
    <source>
        <strain>Shi470</strain>
    </source>
</reference>
<comment type="function">
    <text evidence="1">An accessory protein needed during the final step in the assembly of 30S ribosomal subunit, possibly for assembly of the head region. Essential for efficient processing of 16S rRNA. May be needed both before and after RbfA during the maturation of 16S rRNA. It has affinity for free ribosomal 30S subunits but not for 70S ribosomes.</text>
</comment>
<comment type="subunit">
    <text evidence="1">Binds ribosomal protein uS19.</text>
</comment>
<comment type="subcellular location">
    <subcellularLocation>
        <location evidence="1">Cytoplasm</location>
    </subcellularLocation>
</comment>
<comment type="domain">
    <text evidence="1">The PRC barrel domain binds ribosomal protein uS19.</text>
</comment>
<comment type="similarity">
    <text evidence="1">Belongs to the RimM family.</text>
</comment>
<feature type="chain" id="PRO_0000351762" description="Ribosome maturation factor RimM">
    <location>
        <begin position="1"/>
        <end position="184"/>
    </location>
</feature>
<feature type="domain" description="PRC barrel" evidence="1">
    <location>
        <begin position="101"/>
        <end position="180"/>
    </location>
</feature>
<protein>
    <recommendedName>
        <fullName evidence="1">Ribosome maturation factor RimM</fullName>
    </recommendedName>
</protein>
<name>RIMM_HELPS</name>
<evidence type="ECO:0000255" key="1">
    <source>
        <dbReference type="HAMAP-Rule" id="MF_00014"/>
    </source>
</evidence>
<accession>B2UUQ8</accession>